<accession>Q0ID22</accession>
<protein>
    <recommendedName>
        <fullName evidence="1">Large ribosomal subunit protein uL15</fullName>
    </recommendedName>
    <alternativeName>
        <fullName evidence="3">50S ribosomal protein L15</fullName>
    </alternativeName>
</protein>
<sequence length="150" mass="15931">MTLRLESLKPNKGARRRKLRKGRGIAAGQGASCGFGMRGQKSRSGRPTRPGFEGGQMPLYRRVPKLKHFTLVNPKSFTVLNVSALNEIKAGSTVNLDSLVKDGIVTSPKSPLKILGNGELKAKLTVQAAAFTASARAKIEAAGGTCEVLD</sequence>
<name>RL15_SYNS3</name>
<gene>
    <name evidence="1" type="primary">rplO</name>
    <name type="ordered locus">sync_0420</name>
</gene>
<evidence type="ECO:0000255" key="1">
    <source>
        <dbReference type="HAMAP-Rule" id="MF_01341"/>
    </source>
</evidence>
<evidence type="ECO:0000256" key="2">
    <source>
        <dbReference type="SAM" id="MobiDB-lite"/>
    </source>
</evidence>
<evidence type="ECO:0000305" key="3"/>
<dbReference type="EMBL" id="CP000435">
    <property type="protein sequence ID" value="ABI45898.1"/>
    <property type="molecule type" value="Genomic_DNA"/>
</dbReference>
<dbReference type="RefSeq" id="WP_011618385.1">
    <property type="nucleotide sequence ID" value="NC_008319.1"/>
</dbReference>
<dbReference type="SMR" id="Q0ID22"/>
<dbReference type="STRING" id="64471.sync_0420"/>
<dbReference type="KEGG" id="syg:sync_0420"/>
<dbReference type="eggNOG" id="COG0200">
    <property type="taxonomic scope" value="Bacteria"/>
</dbReference>
<dbReference type="HOGENOM" id="CLU_055188_4_2_3"/>
<dbReference type="OrthoDB" id="9810293at2"/>
<dbReference type="Proteomes" id="UP000001961">
    <property type="component" value="Chromosome"/>
</dbReference>
<dbReference type="GO" id="GO:0022625">
    <property type="term" value="C:cytosolic large ribosomal subunit"/>
    <property type="evidence" value="ECO:0007669"/>
    <property type="project" value="TreeGrafter"/>
</dbReference>
<dbReference type="GO" id="GO:0019843">
    <property type="term" value="F:rRNA binding"/>
    <property type="evidence" value="ECO:0007669"/>
    <property type="project" value="UniProtKB-UniRule"/>
</dbReference>
<dbReference type="GO" id="GO:0003735">
    <property type="term" value="F:structural constituent of ribosome"/>
    <property type="evidence" value="ECO:0007669"/>
    <property type="project" value="InterPro"/>
</dbReference>
<dbReference type="GO" id="GO:0006412">
    <property type="term" value="P:translation"/>
    <property type="evidence" value="ECO:0007669"/>
    <property type="project" value="UniProtKB-UniRule"/>
</dbReference>
<dbReference type="Gene3D" id="3.100.10.10">
    <property type="match status" value="1"/>
</dbReference>
<dbReference type="HAMAP" id="MF_01341">
    <property type="entry name" value="Ribosomal_uL15"/>
    <property type="match status" value="1"/>
</dbReference>
<dbReference type="InterPro" id="IPR030878">
    <property type="entry name" value="Ribosomal_uL15"/>
</dbReference>
<dbReference type="InterPro" id="IPR021131">
    <property type="entry name" value="Ribosomal_uL15/eL18"/>
</dbReference>
<dbReference type="InterPro" id="IPR036227">
    <property type="entry name" value="Ribosomal_uL15/eL18_sf"/>
</dbReference>
<dbReference type="InterPro" id="IPR005749">
    <property type="entry name" value="Ribosomal_uL15_bac-type"/>
</dbReference>
<dbReference type="InterPro" id="IPR001196">
    <property type="entry name" value="Ribosomal_uL15_CS"/>
</dbReference>
<dbReference type="NCBIfam" id="TIGR01071">
    <property type="entry name" value="rplO_bact"/>
    <property type="match status" value="1"/>
</dbReference>
<dbReference type="PANTHER" id="PTHR12934">
    <property type="entry name" value="50S RIBOSOMAL PROTEIN L15"/>
    <property type="match status" value="1"/>
</dbReference>
<dbReference type="PANTHER" id="PTHR12934:SF11">
    <property type="entry name" value="LARGE RIBOSOMAL SUBUNIT PROTEIN UL15M"/>
    <property type="match status" value="1"/>
</dbReference>
<dbReference type="Pfam" id="PF00828">
    <property type="entry name" value="Ribosomal_L27A"/>
    <property type="match status" value="1"/>
</dbReference>
<dbReference type="SUPFAM" id="SSF52080">
    <property type="entry name" value="Ribosomal proteins L15p and L18e"/>
    <property type="match status" value="1"/>
</dbReference>
<dbReference type="PROSITE" id="PS00475">
    <property type="entry name" value="RIBOSOMAL_L15"/>
    <property type="match status" value="1"/>
</dbReference>
<feature type="chain" id="PRO_1000073319" description="Large ribosomal subunit protein uL15">
    <location>
        <begin position="1"/>
        <end position="150"/>
    </location>
</feature>
<feature type="region of interest" description="Disordered" evidence="2">
    <location>
        <begin position="1"/>
        <end position="57"/>
    </location>
</feature>
<feature type="compositionally biased region" description="Basic residues" evidence="2">
    <location>
        <begin position="12"/>
        <end position="23"/>
    </location>
</feature>
<feature type="compositionally biased region" description="Gly residues" evidence="2">
    <location>
        <begin position="25"/>
        <end position="37"/>
    </location>
</feature>
<organism>
    <name type="scientific">Synechococcus sp. (strain CC9311)</name>
    <dbReference type="NCBI Taxonomy" id="64471"/>
    <lineage>
        <taxon>Bacteria</taxon>
        <taxon>Bacillati</taxon>
        <taxon>Cyanobacteriota</taxon>
        <taxon>Cyanophyceae</taxon>
        <taxon>Synechococcales</taxon>
        <taxon>Synechococcaceae</taxon>
        <taxon>Synechococcus</taxon>
    </lineage>
</organism>
<reference key="1">
    <citation type="journal article" date="2006" name="Proc. Natl. Acad. Sci. U.S.A.">
        <title>Genome sequence of Synechococcus CC9311: insights into adaptation to a coastal environment.</title>
        <authorList>
            <person name="Palenik B."/>
            <person name="Ren Q."/>
            <person name="Dupont C.L."/>
            <person name="Myers G.S."/>
            <person name="Heidelberg J.F."/>
            <person name="Badger J.H."/>
            <person name="Madupu R."/>
            <person name="Nelson W.C."/>
            <person name="Brinkac L.M."/>
            <person name="Dodson R.J."/>
            <person name="Durkin A.S."/>
            <person name="Daugherty S.C."/>
            <person name="Sullivan S.A."/>
            <person name="Khouri H."/>
            <person name="Mohamoud Y."/>
            <person name="Halpin R."/>
            <person name="Paulsen I.T."/>
        </authorList>
    </citation>
    <scope>NUCLEOTIDE SEQUENCE [LARGE SCALE GENOMIC DNA]</scope>
    <source>
        <strain>CC9311</strain>
    </source>
</reference>
<keyword id="KW-1185">Reference proteome</keyword>
<keyword id="KW-0687">Ribonucleoprotein</keyword>
<keyword id="KW-0689">Ribosomal protein</keyword>
<keyword id="KW-0694">RNA-binding</keyword>
<keyword id="KW-0699">rRNA-binding</keyword>
<proteinExistence type="inferred from homology"/>
<comment type="function">
    <text evidence="1">Binds to the 23S rRNA.</text>
</comment>
<comment type="subunit">
    <text evidence="1">Part of the 50S ribosomal subunit.</text>
</comment>
<comment type="similarity">
    <text evidence="1">Belongs to the universal ribosomal protein uL15 family.</text>
</comment>